<sequence length="463" mass="52274">MDNGMLSRFIMTQTLLVFCISMTLSSHFGFSQMPTSSVQDETNDNITIFTRILDGLLDGYDNRLRPGLGERITQVRTDIYVTSFGPVSDTEMEYTIDVFFRQSWKDERLRFKGPMQRLPLNNLLASKIWTPDTFFHNGKKSIAHNMTTPNKLLRLEDDGTLLYTMRLTISAECPMQLEDFPMDAHACPLKFGSYAYPNSEVVYVWTNGSTKSVVVAEDGSRLNQYHLMGQTVGTENISTSTGEYTIMTAHFHLKRKIGYFVIQTYLPCIMTVILSQVSFWLNRESVPARTVFGVTTVLTMTTLSISARNSLPKVAYATAMDWFIAVCYAFVFSALIEFATVNYFTKRGWAWDGKKALEAAKIKKKERELILNKSTNAFTTGKLTHPPNIPKEQPPAGTANAPTVSIKASEEKTAESKKTYNSISKIDKMSRIVFPILFGTFNLVYWATYLNREPVIKGATSPK</sequence>
<keyword id="KW-1003">Cell membrane</keyword>
<keyword id="KW-0868">Chloride</keyword>
<keyword id="KW-0869">Chloride channel</keyword>
<keyword id="KW-1015">Disulfide bond</keyword>
<keyword id="KW-0325">Glycoprotein</keyword>
<keyword id="KW-0407">Ion channel</keyword>
<keyword id="KW-0406">Ion transport</keyword>
<keyword id="KW-1017">Isopeptide bond</keyword>
<keyword id="KW-1071">Ligand-gated ion channel</keyword>
<keyword id="KW-0472">Membrane</keyword>
<keyword id="KW-0628">Postsynaptic cell membrane</keyword>
<keyword id="KW-0675">Receptor</keyword>
<keyword id="KW-1185">Reference proteome</keyword>
<keyword id="KW-0732">Signal</keyword>
<keyword id="KW-0770">Synapse</keyword>
<keyword id="KW-0812">Transmembrane</keyword>
<keyword id="KW-1133">Transmembrane helix</keyword>
<keyword id="KW-0813">Transport</keyword>
<keyword id="KW-0832">Ubl conjugation</keyword>
<evidence type="ECO:0000250" key="1">
    <source>
        <dbReference type="UniProtKB" id="P14867"/>
    </source>
</evidence>
<evidence type="ECO:0000250" key="2">
    <source>
        <dbReference type="UniProtKB" id="P19969"/>
    </source>
</evidence>
<evidence type="ECO:0000250" key="3">
    <source>
        <dbReference type="UniProtKB" id="P31644"/>
    </source>
</evidence>
<evidence type="ECO:0000250" key="4">
    <source>
        <dbReference type="UniProtKB" id="P62813"/>
    </source>
</evidence>
<evidence type="ECO:0000255" key="5"/>
<evidence type="ECO:0000256" key="6">
    <source>
        <dbReference type="SAM" id="MobiDB-lite"/>
    </source>
</evidence>
<evidence type="ECO:0000269" key="7">
    <source>
    </source>
</evidence>
<evidence type="ECO:0000305" key="8"/>
<evidence type="ECO:0000312" key="9">
    <source>
        <dbReference type="MGI" id="MGI:95617"/>
    </source>
</evidence>
<gene>
    <name evidence="9" type="primary">Gabra5</name>
</gene>
<dbReference type="EMBL" id="AK038476">
    <property type="protein sequence ID" value="BAC30012.1"/>
    <property type="molecule type" value="mRNA"/>
</dbReference>
<dbReference type="EMBL" id="AK083185">
    <property type="protein sequence ID" value="BAC38799.1"/>
    <property type="molecule type" value="mRNA"/>
</dbReference>
<dbReference type="EMBL" id="BC062112">
    <property type="protein sequence ID" value="AAH62112.1"/>
    <property type="molecule type" value="mRNA"/>
</dbReference>
<dbReference type="CCDS" id="CCDS21322.1"/>
<dbReference type="RefSeq" id="NP_001349090.1">
    <property type="nucleotide sequence ID" value="NM_001362161.1"/>
</dbReference>
<dbReference type="RefSeq" id="NP_001349091.1">
    <property type="nucleotide sequence ID" value="NM_001362162.1"/>
</dbReference>
<dbReference type="RefSeq" id="NP_795916.1">
    <property type="nucleotide sequence ID" value="NM_176942.4"/>
</dbReference>
<dbReference type="RefSeq" id="XP_006540619.1">
    <property type="nucleotide sequence ID" value="XM_006540556.5"/>
</dbReference>
<dbReference type="RefSeq" id="XP_006540620.1">
    <property type="nucleotide sequence ID" value="XM_006540557.5"/>
</dbReference>
<dbReference type="RefSeq" id="XP_006540621.1">
    <property type="nucleotide sequence ID" value="XM_006540558.2"/>
</dbReference>
<dbReference type="RefSeq" id="XP_006540622.1">
    <property type="nucleotide sequence ID" value="XM_006540559.3"/>
</dbReference>
<dbReference type="RefSeq" id="XP_006540623.1">
    <property type="nucleotide sequence ID" value="XM_006540560.5"/>
</dbReference>
<dbReference type="RefSeq" id="XP_030097848.1">
    <property type="nucleotide sequence ID" value="XM_030241988.2"/>
</dbReference>
<dbReference type="SMR" id="Q8BHJ7"/>
<dbReference type="BioGRID" id="225988">
    <property type="interactions" value="3"/>
</dbReference>
<dbReference type="ComplexPortal" id="CPX-2984">
    <property type="entry name" value="GABA-A receptor, alpha5-beta3-gamma2"/>
</dbReference>
<dbReference type="FunCoup" id="Q8BHJ7">
    <property type="interactions" value="561"/>
</dbReference>
<dbReference type="IntAct" id="Q8BHJ7">
    <property type="interactions" value="1"/>
</dbReference>
<dbReference type="MINT" id="Q8BHJ7"/>
<dbReference type="STRING" id="10090.ENSMUSP00000063276"/>
<dbReference type="ChEMBL" id="CHEMBL2304"/>
<dbReference type="DrugCentral" id="Q8BHJ7"/>
<dbReference type="GlyConnect" id="2324">
    <property type="glycosylation" value="6 N-Linked glycans (1 site)"/>
</dbReference>
<dbReference type="GlyCosmos" id="Q8BHJ7">
    <property type="glycosylation" value="4 sites, 6 glycans"/>
</dbReference>
<dbReference type="GlyGen" id="Q8BHJ7">
    <property type="glycosylation" value="4 sites, 8 N-linked glycans (2 sites)"/>
</dbReference>
<dbReference type="iPTMnet" id="Q8BHJ7"/>
<dbReference type="PhosphoSitePlus" id="Q8BHJ7"/>
<dbReference type="SwissPalm" id="Q8BHJ7"/>
<dbReference type="PaxDb" id="10090-ENSMUSP00000063276"/>
<dbReference type="PeptideAtlas" id="Q8BHJ7"/>
<dbReference type="ProteomicsDB" id="268849"/>
<dbReference type="ABCD" id="Q8BHJ7">
    <property type="antibodies" value="1 sequenced antibody"/>
</dbReference>
<dbReference type="Antibodypedia" id="22325">
    <property type="antibodies" value="384 antibodies from 32 providers"/>
</dbReference>
<dbReference type="DNASU" id="110886"/>
<dbReference type="Ensembl" id="ENSMUST00000068456.8">
    <property type="protein sequence ID" value="ENSMUSP00000063276.7"/>
    <property type="gene ID" value="ENSMUSG00000055078.8"/>
</dbReference>
<dbReference type="Ensembl" id="ENSMUST00000206382.2">
    <property type="protein sequence ID" value="ENSMUSP00000146238.2"/>
    <property type="gene ID" value="ENSMUSG00000055078.8"/>
</dbReference>
<dbReference type="Ensembl" id="ENSMUST00000206734.2">
    <property type="protein sequence ID" value="ENSMUSP00000145685.2"/>
    <property type="gene ID" value="ENSMUSG00000055078.8"/>
</dbReference>
<dbReference type="GeneID" id="110886"/>
<dbReference type="KEGG" id="mmu:110886"/>
<dbReference type="UCSC" id="uc009heb.1">
    <property type="organism name" value="mouse"/>
</dbReference>
<dbReference type="AGR" id="MGI:95617"/>
<dbReference type="CTD" id="2558"/>
<dbReference type="MGI" id="MGI:95617">
    <property type="gene designation" value="Gabra5"/>
</dbReference>
<dbReference type="VEuPathDB" id="HostDB:ENSMUSG00000055078"/>
<dbReference type="eggNOG" id="KOG3642">
    <property type="taxonomic scope" value="Eukaryota"/>
</dbReference>
<dbReference type="GeneTree" id="ENSGT00940000156234"/>
<dbReference type="HOGENOM" id="CLU_010920_2_1_1"/>
<dbReference type="InParanoid" id="Q8BHJ7"/>
<dbReference type="OMA" id="RCPLRIG"/>
<dbReference type="OrthoDB" id="203862at2759"/>
<dbReference type="PhylomeDB" id="Q8BHJ7"/>
<dbReference type="TreeFam" id="TF315453"/>
<dbReference type="Reactome" id="R-MMU-977443">
    <property type="pathway name" value="GABA receptor activation"/>
</dbReference>
<dbReference type="BioGRID-ORCS" id="110886">
    <property type="hits" value="0 hits in 78 CRISPR screens"/>
</dbReference>
<dbReference type="ChiTaRS" id="Gabra5">
    <property type="organism name" value="mouse"/>
</dbReference>
<dbReference type="PRO" id="PR:Q8BHJ7"/>
<dbReference type="Proteomes" id="UP000000589">
    <property type="component" value="Chromosome 7"/>
</dbReference>
<dbReference type="RNAct" id="Q8BHJ7">
    <property type="molecule type" value="protein"/>
</dbReference>
<dbReference type="Bgee" id="ENSMUSG00000055078">
    <property type="expression patterns" value="Expressed in hippocampal field and 80 other cell types or tissues"/>
</dbReference>
<dbReference type="GO" id="GO:0044297">
    <property type="term" value="C:cell body"/>
    <property type="evidence" value="ECO:0000314"/>
    <property type="project" value="MGI"/>
</dbReference>
<dbReference type="GO" id="GO:0034707">
    <property type="term" value="C:chloride channel complex"/>
    <property type="evidence" value="ECO:0007669"/>
    <property type="project" value="UniProtKB-KW"/>
</dbReference>
<dbReference type="GO" id="GO:0005829">
    <property type="term" value="C:cytosol"/>
    <property type="evidence" value="ECO:0007669"/>
    <property type="project" value="Ensembl"/>
</dbReference>
<dbReference type="GO" id="GO:0030425">
    <property type="term" value="C:dendrite"/>
    <property type="evidence" value="ECO:0000314"/>
    <property type="project" value="MGI"/>
</dbReference>
<dbReference type="GO" id="GO:1902711">
    <property type="term" value="C:GABA-A receptor complex"/>
    <property type="evidence" value="ECO:0000266"/>
    <property type="project" value="ComplexPortal"/>
</dbReference>
<dbReference type="GO" id="GO:0098982">
    <property type="term" value="C:GABA-ergic synapse"/>
    <property type="evidence" value="ECO:0007669"/>
    <property type="project" value="Ensembl"/>
</dbReference>
<dbReference type="GO" id="GO:0032809">
    <property type="term" value="C:neuronal cell body membrane"/>
    <property type="evidence" value="ECO:0007669"/>
    <property type="project" value="Ensembl"/>
</dbReference>
<dbReference type="GO" id="GO:0005654">
    <property type="term" value="C:nucleoplasm"/>
    <property type="evidence" value="ECO:0007669"/>
    <property type="project" value="Ensembl"/>
</dbReference>
<dbReference type="GO" id="GO:0099634">
    <property type="term" value="C:postsynaptic specialization membrane"/>
    <property type="evidence" value="ECO:0007669"/>
    <property type="project" value="Ensembl"/>
</dbReference>
<dbReference type="GO" id="GO:0042734">
    <property type="term" value="C:presynaptic membrane"/>
    <property type="evidence" value="ECO:0007669"/>
    <property type="project" value="Ensembl"/>
</dbReference>
<dbReference type="GO" id="GO:0050811">
    <property type="term" value="F:GABA receptor binding"/>
    <property type="evidence" value="ECO:0007669"/>
    <property type="project" value="Ensembl"/>
</dbReference>
<dbReference type="GO" id="GO:0004890">
    <property type="term" value="F:GABA-A receptor activity"/>
    <property type="evidence" value="ECO:0000315"/>
    <property type="project" value="UniProtKB"/>
</dbReference>
<dbReference type="GO" id="GO:0022851">
    <property type="term" value="F:GABA-gated chloride ion channel activity"/>
    <property type="evidence" value="ECO:0000315"/>
    <property type="project" value="UniProtKB"/>
</dbReference>
<dbReference type="GO" id="GO:0099507">
    <property type="term" value="F:ligand-gated monoatomic ion channel activity involved in regulation of presynaptic membrane potential"/>
    <property type="evidence" value="ECO:0007669"/>
    <property type="project" value="Ensembl"/>
</dbReference>
<dbReference type="GO" id="GO:1904315">
    <property type="term" value="F:transmitter-gated monoatomic ion channel activity involved in regulation of postsynaptic membrane potential"/>
    <property type="evidence" value="ECO:0007669"/>
    <property type="project" value="Ensembl"/>
</dbReference>
<dbReference type="GO" id="GO:0008306">
    <property type="term" value="P:associative learning"/>
    <property type="evidence" value="ECO:0000315"/>
    <property type="project" value="MGI"/>
</dbReference>
<dbReference type="GO" id="GO:0001662">
    <property type="term" value="P:behavioral fear response"/>
    <property type="evidence" value="ECO:0000315"/>
    <property type="project" value="MGI"/>
</dbReference>
<dbReference type="GO" id="GO:0090102">
    <property type="term" value="P:cochlea development"/>
    <property type="evidence" value="ECO:0000315"/>
    <property type="project" value="DFLAT"/>
</dbReference>
<dbReference type="GO" id="GO:0007214">
    <property type="term" value="P:gamma-aminobutyric acid signaling pathway"/>
    <property type="evidence" value="ECO:0000266"/>
    <property type="project" value="ComplexPortal"/>
</dbReference>
<dbReference type="GO" id="GO:0060119">
    <property type="term" value="P:inner ear receptor cell development"/>
    <property type="evidence" value="ECO:0000315"/>
    <property type="project" value="DFLAT"/>
</dbReference>
<dbReference type="GO" id="GO:0060384">
    <property type="term" value="P:innervation"/>
    <property type="evidence" value="ECO:0000315"/>
    <property type="project" value="DFLAT"/>
</dbReference>
<dbReference type="GO" id="GO:0048666">
    <property type="term" value="P:neuron development"/>
    <property type="evidence" value="ECO:0000315"/>
    <property type="project" value="DFLAT"/>
</dbReference>
<dbReference type="CDD" id="cd19038">
    <property type="entry name" value="LGIC_ECD_GABAAR_A5"/>
    <property type="match status" value="1"/>
</dbReference>
<dbReference type="CDD" id="cd19052">
    <property type="entry name" value="LGIC_TM_GABAAR_alpha"/>
    <property type="match status" value="1"/>
</dbReference>
<dbReference type="FunFam" id="2.70.170.10:FF:000001">
    <property type="entry name" value="Gamma-aminobutyric acid A receptor subunit alpha-2"/>
    <property type="match status" value="1"/>
</dbReference>
<dbReference type="FunFam" id="1.20.58.390:FF:000002">
    <property type="entry name" value="Putative gamma-aminobutyric acid receptor subunit alpha-5"/>
    <property type="match status" value="1"/>
</dbReference>
<dbReference type="Gene3D" id="2.70.170.10">
    <property type="entry name" value="Neurotransmitter-gated ion-channel ligand-binding domain"/>
    <property type="match status" value="1"/>
</dbReference>
<dbReference type="Gene3D" id="1.20.58.390">
    <property type="entry name" value="Neurotransmitter-gated ion-channel transmembrane domain"/>
    <property type="match status" value="1"/>
</dbReference>
<dbReference type="InterPro" id="IPR006028">
    <property type="entry name" value="GABAA/Glycine_rcpt"/>
</dbReference>
<dbReference type="InterPro" id="IPR001390">
    <property type="entry name" value="GABAAa_rcpt"/>
</dbReference>
<dbReference type="InterPro" id="IPR005435">
    <property type="entry name" value="GABBAa5_rcpt"/>
</dbReference>
<dbReference type="InterPro" id="IPR047024">
    <property type="entry name" value="Gabra-1-6_TM"/>
</dbReference>
<dbReference type="InterPro" id="IPR006202">
    <property type="entry name" value="Neur_chan_lig-bd"/>
</dbReference>
<dbReference type="InterPro" id="IPR036734">
    <property type="entry name" value="Neur_chan_lig-bd_sf"/>
</dbReference>
<dbReference type="InterPro" id="IPR006201">
    <property type="entry name" value="Neur_channel"/>
</dbReference>
<dbReference type="InterPro" id="IPR036719">
    <property type="entry name" value="Neuro-gated_channel_TM_sf"/>
</dbReference>
<dbReference type="InterPro" id="IPR038050">
    <property type="entry name" value="Neuro_actylchol_rec"/>
</dbReference>
<dbReference type="InterPro" id="IPR006029">
    <property type="entry name" value="Neurotrans-gated_channel_TM"/>
</dbReference>
<dbReference type="InterPro" id="IPR018000">
    <property type="entry name" value="Neurotransmitter_ion_chnl_CS"/>
</dbReference>
<dbReference type="NCBIfam" id="TIGR00860">
    <property type="entry name" value="LIC"/>
    <property type="match status" value="1"/>
</dbReference>
<dbReference type="PANTHER" id="PTHR18945">
    <property type="entry name" value="NEUROTRANSMITTER GATED ION CHANNEL"/>
    <property type="match status" value="1"/>
</dbReference>
<dbReference type="Pfam" id="PF02931">
    <property type="entry name" value="Neur_chan_LBD"/>
    <property type="match status" value="1"/>
</dbReference>
<dbReference type="Pfam" id="PF02932">
    <property type="entry name" value="Neur_chan_memb"/>
    <property type="match status" value="1"/>
</dbReference>
<dbReference type="PRINTS" id="PR01079">
    <property type="entry name" value="GABAARALPHA"/>
</dbReference>
<dbReference type="PRINTS" id="PR01618">
    <property type="entry name" value="GABAARALPHA5"/>
</dbReference>
<dbReference type="PRINTS" id="PR00253">
    <property type="entry name" value="GABAARECEPTR"/>
</dbReference>
<dbReference type="PRINTS" id="PR00252">
    <property type="entry name" value="NRIONCHANNEL"/>
</dbReference>
<dbReference type="SUPFAM" id="SSF90112">
    <property type="entry name" value="Neurotransmitter-gated ion-channel transmembrane pore"/>
    <property type="match status" value="1"/>
</dbReference>
<dbReference type="SUPFAM" id="SSF63712">
    <property type="entry name" value="Nicotinic receptor ligand binding domain-like"/>
    <property type="match status" value="1"/>
</dbReference>
<dbReference type="PROSITE" id="PS00236">
    <property type="entry name" value="NEUROTR_ION_CHANNEL"/>
    <property type="match status" value="1"/>
</dbReference>
<accession>Q8BHJ7</accession>
<comment type="function">
    <text evidence="1 3 7">Alpha subunit of the heteropentameric ligand-gated chloride channel gated by gamma-aminobutyric acid (GABA), a major inhibitory neurotransmitter in the brain (PubMed:14993607). GABA-gated chloride channels, also named GABA(A) receptors (GABAAR), consist of five subunits arranged around a central pore and contain GABA active binding site(s) located at the alpha and beta subunit interface(s) (By similarity). When activated by GABA, GABAARs selectively allow the flow of chloride anions across the cell membrane down their electrochemical gradient (By similarity). GABAARs containing alpha-5/GABRA5 are mainly extrasynaptic and contribute to the tonic GABAergic inhibition of the hippocampus (PubMed:14993607). Extrasynaptic alpha-5-containing GABAARs in CA1 pyramidal neurons play a role in learning and memory processes (PubMed:14993607).</text>
</comment>
<comment type="catalytic activity">
    <reaction evidence="3">
        <text>chloride(in) = chloride(out)</text>
        <dbReference type="Rhea" id="RHEA:29823"/>
        <dbReference type="ChEBI" id="CHEBI:17996"/>
    </reaction>
</comment>
<comment type="subunit">
    <text evidence="3">Heteropentamer, formed by a combination of alpha (GABRA1-6), beta (GABRB1-3), gamma (GABRG1-3), delta (GABRD), epsilon (GABRE), rho (GABRR1-3), pi (GABRP) and theta (GABRQ) chains, each subunit exhibiting distinct physiological and pharmacological properties.</text>
</comment>
<comment type="interaction">
    <interactant intactId="EBI-8069233">
        <id>Q8BHJ7</id>
    </interactant>
    <interactant intactId="EBI-8069271">
        <id>Q5WQV5</id>
        <label>Rdx</label>
    </interactant>
    <organismsDiffer>true</organismsDiffer>
    <experiments>4</experiments>
</comment>
<comment type="subcellular location">
    <subcellularLocation>
        <location evidence="3">Postsynaptic cell membrane</location>
        <topology evidence="3">Multi-pass membrane protein</topology>
    </subcellularLocation>
    <subcellularLocation>
        <location evidence="3">Cell membrane</location>
        <topology evidence="3">Multi-pass membrane protein</topology>
    </subcellularLocation>
</comment>
<comment type="tissue specificity">
    <text evidence="7">Expressed in brain, in hippocampal pyramidal neurons.</text>
</comment>
<comment type="domain">
    <text evidence="3">GABAARs subunits share a common topological structure: a peptide sequence made up of a long extracellular N-terminal, four transmembrane domains, intracellular or cytoplasmic domain located between the third and the fourth transmembrane domains.</text>
</comment>
<comment type="similarity">
    <text evidence="8">Belongs to the ligand-gated ion channel (TC 1.A.9) family. Gamma-aminobutyric acid receptor (TC 1.A.9.5) subfamily. GABRA5 sub-subfamily.</text>
</comment>
<protein>
    <recommendedName>
        <fullName evidence="2">Gamma-aminobutyric acid receptor subunit alpha-5</fullName>
    </recommendedName>
    <alternativeName>
        <fullName evidence="3">GABA(A) receptor subunit alpha-5</fullName>
        <shortName>GABAAR subunit alpha-5</shortName>
    </alternativeName>
</protein>
<feature type="signal peptide" evidence="5">
    <location>
        <begin position="1"/>
        <end position="25"/>
    </location>
</feature>
<feature type="chain" id="PRO_0000000445" description="Gamma-aminobutyric acid receptor subunit alpha-5">
    <location>
        <begin position="26"/>
        <end position="463"/>
    </location>
</feature>
<feature type="topological domain" description="Extracellular" evidence="5">
    <location>
        <begin position="26"/>
        <end position="260"/>
    </location>
</feature>
<feature type="transmembrane region" description="Helical" evidence="3">
    <location>
        <begin position="261"/>
        <end position="281"/>
    </location>
</feature>
<feature type="transmembrane region" description="Helical" evidence="3">
    <location>
        <begin position="287"/>
        <end position="308"/>
    </location>
</feature>
<feature type="transmembrane region" description="Helical" evidence="3">
    <location>
        <begin position="319"/>
        <end position="340"/>
    </location>
</feature>
<feature type="topological domain" description="Cytoplasmic" evidence="5">
    <location>
        <begin position="341"/>
        <end position="428"/>
    </location>
</feature>
<feature type="transmembrane region" description="Helical" evidence="3">
    <location>
        <begin position="429"/>
        <end position="449"/>
    </location>
</feature>
<feature type="region of interest" description="Disordered" evidence="6">
    <location>
        <begin position="387"/>
        <end position="408"/>
    </location>
</feature>
<feature type="binding site" evidence="3">
    <location>
        <position position="101"/>
    </location>
    <ligand>
        <name>4-aminobutanoate</name>
        <dbReference type="ChEBI" id="CHEBI:59888"/>
        <note>ligand shared with the neighboring beta subunit GABRB3</note>
    </ligand>
</feature>
<feature type="binding site" evidence="4">
    <location>
        <position position="164"/>
    </location>
    <ligand>
        <name>4-aminobutanoate</name>
        <dbReference type="ChEBI" id="CHEBI:59888"/>
        <note>ligand shared with the neighboring beta subunit GABRB3</note>
    </ligand>
</feature>
<feature type="glycosylation site" description="N-linked (GlcNAc...) asparagine" evidence="5">
    <location>
        <position position="45"/>
    </location>
</feature>
<feature type="glycosylation site" description="N-linked (GlcNAc...) asparagine" evidence="5">
    <location>
        <position position="145"/>
    </location>
</feature>
<feature type="glycosylation site" description="N-linked (GlcNAc...) asparagine" evidence="5">
    <location>
        <position position="207"/>
    </location>
</feature>
<feature type="glycosylation site" description="N-linked (GlcNAc...) asparagine" evidence="5">
    <location>
        <position position="236"/>
    </location>
</feature>
<feature type="disulfide bond" evidence="3">
    <location>
        <begin position="173"/>
        <end position="187"/>
    </location>
</feature>
<feature type="cross-link" description="Glycyl lysine isopeptide (Lys-Gly) (interchain with G-Cter in ubiquitin)" evidence="3">
    <location>
        <position position="355"/>
    </location>
</feature>
<name>GBRA5_MOUSE</name>
<reference key="1">
    <citation type="journal article" date="2005" name="Science">
        <title>The transcriptional landscape of the mammalian genome.</title>
        <authorList>
            <person name="Carninci P."/>
            <person name="Kasukawa T."/>
            <person name="Katayama S."/>
            <person name="Gough J."/>
            <person name="Frith M.C."/>
            <person name="Maeda N."/>
            <person name="Oyama R."/>
            <person name="Ravasi T."/>
            <person name="Lenhard B."/>
            <person name="Wells C."/>
            <person name="Kodzius R."/>
            <person name="Shimokawa K."/>
            <person name="Bajic V.B."/>
            <person name="Brenner S.E."/>
            <person name="Batalov S."/>
            <person name="Forrest A.R."/>
            <person name="Zavolan M."/>
            <person name="Davis M.J."/>
            <person name="Wilming L.G."/>
            <person name="Aidinis V."/>
            <person name="Allen J.E."/>
            <person name="Ambesi-Impiombato A."/>
            <person name="Apweiler R."/>
            <person name="Aturaliya R.N."/>
            <person name="Bailey T.L."/>
            <person name="Bansal M."/>
            <person name="Baxter L."/>
            <person name="Beisel K.W."/>
            <person name="Bersano T."/>
            <person name="Bono H."/>
            <person name="Chalk A.M."/>
            <person name="Chiu K.P."/>
            <person name="Choudhary V."/>
            <person name="Christoffels A."/>
            <person name="Clutterbuck D.R."/>
            <person name="Crowe M.L."/>
            <person name="Dalla E."/>
            <person name="Dalrymple B.P."/>
            <person name="de Bono B."/>
            <person name="Della Gatta G."/>
            <person name="di Bernardo D."/>
            <person name="Down T."/>
            <person name="Engstrom P."/>
            <person name="Fagiolini M."/>
            <person name="Faulkner G."/>
            <person name="Fletcher C.F."/>
            <person name="Fukushima T."/>
            <person name="Furuno M."/>
            <person name="Futaki S."/>
            <person name="Gariboldi M."/>
            <person name="Georgii-Hemming P."/>
            <person name="Gingeras T.R."/>
            <person name="Gojobori T."/>
            <person name="Green R.E."/>
            <person name="Gustincich S."/>
            <person name="Harbers M."/>
            <person name="Hayashi Y."/>
            <person name="Hensch T.K."/>
            <person name="Hirokawa N."/>
            <person name="Hill D."/>
            <person name="Huminiecki L."/>
            <person name="Iacono M."/>
            <person name="Ikeo K."/>
            <person name="Iwama A."/>
            <person name="Ishikawa T."/>
            <person name="Jakt M."/>
            <person name="Kanapin A."/>
            <person name="Katoh M."/>
            <person name="Kawasawa Y."/>
            <person name="Kelso J."/>
            <person name="Kitamura H."/>
            <person name="Kitano H."/>
            <person name="Kollias G."/>
            <person name="Krishnan S.P."/>
            <person name="Kruger A."/>
            <person name="Kummerfeld S.K."/>
            <person name="Kurochkin I.V."/>
            <person name="Lareau L.F."/>
            <person name="Lazarevic D."/>
            <person name="Lipovich L."/>
            <person name="Liu J."/>
            <person name="Liuni S."/>
            <person name="McWilliam S."/>
            <person name="Madan Babu M."/>
            <person name="Madera M."/>
            <person name="Marchionni L."/>
            <person name="Matsuda H."/>
            <person name="Matsuzawa S."/>
            <person name="Miki H."/>
            <person name="Mignone F."/>
            <person name="Miyake S."/>
            <person name="Morris K."/>
            <person name="Mottagui-Tabar S."/>
            <person name="Mulder N."/>
            <person name="Nakano N."/>
            <person name="Nakauchi H."/>
            <person name="Ng P."/>
            <person name="Nilsson R."/>
            <person name="Nishiguchi S."/>
            <person name="Nishikawa S."/>
            <person name="Nori F."/>
            <person name="Ohara O."/>
            <person name="Okazaki Y."/>
            <person name="Orlando V."/>
            <person name="Pang K.C."/>
            <person name="Pavan W.J."/>
            <person name="Pavesi G."/>
            <person name="Pesole G."/>
            <person name="Petrovsky N."/>
            <person name="Piazza S."/>
            <person name="Reed J."/>
            <person name="Reid J.F."/>
            <person name="Ring B.Z."/>
            <person name="Ringwald M."/>
            <person name="Rost B."/>
            <person name="Ruan Y."/>
            <person name="Salzberg S.L."/>
            <person name="Sandelin A."/>
            <person name="Schneider C."/>
            <person name="Schoenbach C."/>
            <person name="Sekiguchi K."/>
            <person name="Semple C.A."/>
            <person name="Seno S."/>
            <person name="Sessa L."/>
            <person name="Sheng Y."/>
            <person name="Shibata Y."/>
            <person name="Shimada H."/>
            <person name="Shimada K."/>
            <person name="Silva D."/>
            <person name="Sinclair B."/>
            <person name="Sperling S."/>
            <person name="Stupka E."/>
            <person name="Sugiura K."/>
            <person name="Sultana R."/>
            <person name="Takenaka Y."/>
            <person name="Taki K."/>
            <person name="Tammoja K."/>
            <person name="Tan S.L."/>
            <person name="Tang S."/>
            <person name="Taylor M.S."/>
            <person name="Tegner J."/>
            <person name="Teichmann S.A."/>
            <person name="Ueda H.R."/>
            <person name="van Nimwegen E."/>
            <person name="Verardo R."/>
            <person name="Wei C.L."/>
            <person name="Yagi K."/>
            <person name="Yamanishi H."/>
            <person name="Zabarovsky E."/>
            <person name="Zhu S."/>
            <person name="Zimmer A."/>
            <person name="Hide W."/>
            <person name="Bult C."/>
            <person name="Grimmond S.M."/>
            <person name="Teasdale R.D."/>
            <person name="Liu E.T."/>
            <person name="Brusic V."/>
            <person name="Quackenbush J."/>
            <person name="Wahlestedt C."/>
            <person name="Mattick J.S."/>
            <person name="Hume D.A."/>
            <person name="Kai C."/>
            <person name="Sasaki D."/>
            <person name="Tomaru Y."/>
            <person name="Fukuda S."/>
            <person name="Kanamori-Katayama M."/>
            <person name="Suzuki M."/>
            <person name="Aoki J."/>
            <person name="Arakawa T."/>
            <person name="Iida J."/>
            <person name="Imamura K."/>
            <person name="Itoh M."/>
            <person name="Kato T."/>
            <person name="Kawaji H."/>
            <person name="Kawagashira N."/>
            <person name="Kawashima T."/>
            <person name="Kojima M."/>
            <person name="Kondo S."/>
            <person name="Konno H."/>
            <person name="Nakano K."/>
            <person name="Ninomiya N."/>
            <person name="Nishio T."/>
            <person name="Okada M."/>
            <person name="Plessy C."/>
            <person name="Shibata K."/>
            <person name="Shiraki T."/>
            <person name="Suzuki S."/>
            <person name="Tagami M."/>
            <person name="Waki K."/>
            <person name="Watahiki A."/>
            <person name="Okamura-Oho Y."/>
            <person name="Suzuki H."/>
            <person name="Kawai J."/>
            <person name="Hayashizaki Y."/>
        </authorList>
    </citation>
    <scope>NUCLEOTIDE SEQUENCE [LARGE SCALE MRNA]</scope>
    <source>
        <strain>C57BL/6J</strain>
        <tissue>Hippocampus</tissue>
        <tissue>Hypothalamus</tissue>
    </source>
</reference>
<reference key="2">
    <citation type="journal article" date="2004" name="Genome Res.">
        <title>The status, quality, and expansion of the NIH full-length cDNA project: the Mammalian Gene Collection (MGC).</title>
        <authorList>
            <consortium name="The MGC Project Team"/>
        </authorList>
    </citation>
    <scope>NUCLEOTIDE SEQUENCE [LARGE SCALE MRNA]</scope>
    <source>
        <strain>C57BL/6J</strain>
        <tissue>Brain</tissue>
    </source>
</reference>
<reference key="3">
    <citation type="journal article" date="2004" name="Proc. Natl. Acad. Sci. U.S.A.">
        <title>Tonic inhibition in mouse hippocampal CA1 pyramidal neurons is mediated by alpha5 subunit-containing gamma-aminobutyric acid type A receptors.</title>
        <authorList>
            <person name="Caraiscos V.B."/>
            <person name="Elliott E.M."/>
            <person name="You-Ten K.E."/>
            <person name="Cheng V.Y."/>
            <person name="Belelli D."/>
            <person name="Newell J.G."/>
            <person name="Jackson M.F."/>
            <person name="Lambert J.J."/>
            <person name="Rosahl T.W."/>
            <person name="Wafford K.A."/>
            <person name="MacDonald J.F."/>
            <person name="Orser B.A."/>
        </authorList>
    </citation>
    <scope>FUNCTION</scope>
    <scope>TISSUE SPECIFICITY</scope>
</reference>
<organism>
    <name type="scientific">Mus musculus</name>
    <name type="common">Mouse</name>
    <dbReference type="NCBI Taxonomy" id="10090"/>
    <lineage>
        <taxon>Eukaryota</taxon>
        <taxon>Metazoa</taxon>
        <taxon>Chordata</taxon>
        <taxon>Craniata</taxon>
        <taxon>Vertebrata</taxon>
        <taxon>Euteleostomi</taxon>
        <taxon>Mammalia</taxon>
        <taxon>Eutheria</taxon>
        <taxon>Euarchontoglires</taxon>
        <taxon>Glires</taxon>
        <taxon>Rodentia</taxon>
        <taxon>Myomorpha</taxon>
        <taxon>Muroidea</taxon>
        <taxon>Muridae</taxon>
        <taxon>Murinae</taxon>
        <taxon>Mus</taxon>
        <taxon>Mus</taxon>
    </lineage>
</organism>
<proteinExistence type="evidence at protein level"/>